<evidence type="ECO:0000255" key="1">
    <source>
        <dbReference type="PROSITE-ProRule" id="PRU00062"/>
    </source>
</evidence>
<evidence type="ECO:0000255" key="2">
    <source>
        <dbReference type="PROSITE-ProRule" id="PRU00135"/>
    </source>
</evidence>
<evidence type="ECO:0000255" key="3">
    <source>
        <dbReference type="PROSITE-ProRule" id="PRU00145"/>
    </source>
</evidence>
<evidence type="ECO:0000255" key="4">
    <source>
        <dbReference type="PROSITE-ProRule" id="PRU00168"/>
    </source>
</evidence>
<evidence type="ECO:0000256" key="5">
    <source>
        <dbReference type="SAM" id="MobiDB-lite"/>
    </source>
</evidence>
<evidence type="ECO:0000269" key="6">
    <source>
    </source>
</evidence>
<evidence type="ECO:0000269" key="7">
    <source>
    </source>
</evidence>
<evidence type="ECO:0000269" key="8">
    <source>
    </source>
</evidence>
<evidence type="ECO:0000305" key="9"/>
<reference key="1">
    <citation type="journal article" date="1992" name="Science">
        <title>The Son of sevenless gene product: a putative activator of Ras.</title>
        <authorList>
            <person name="Bonfini L."/>
            <person name="Karlovich C.A."/>
            <person name="Dasgupta C."/>
            <person name="Banerjee U."/>
        </authorList>
    </citation>
    <scope>NUCLEOTIDE SEQUENCE [MRNA]</scope>
    <scope>FUNCTION</scope>
    <source>
        <strain>Oregon-R</strain>
        <tissue>Imaginal disk</tissue>
    </source>
</reference>
<reference key="2">
    <citation type="journal article" date="1991" name="Cell">
        <title>Ras1 and a putative guanine nucleotide exchange factor perform crucial steps in signaling by the sevenless protein tyrosine kinase.</title>
        <authorList>
            <person name="Simon M.A."/>
            <person name="Bowtell D.D.L."/>
            <person name="Dodson G.S."/>
            <person name="Laverty T.R."/>
            <person name="Rubin G.M."/>
        </authorList>
    </citation>
    <scope>NUCLEOTIDE SEQUENCE [GENOMIC DNA]</scope>
    <scope>FUNCTION</scope>
</reference>
<reference key="3">
    <citation type="journal article" date="1999" name="Genetics">
        <title>An exploration of the sequence of a 2.9-Mb region of the genome of Drosophila melanogaster: the Adh region.</title>
        <authorList>
            <person name="Ashburner M."/>
            <person name="Misra S."/>
            <person name="Roote J."/>
            <person name="Lewis S.E."/>
            <person name="Blazej R.G."/>
            <person name="Davis T."/>
            <person name="Doyle C."/>
            <person name="Galle R.F."/>
            <person name="George R.A."/>
            <person name="Harris N.L."/>
            <person name="Hartzell G."/>
            <person name="Harvey D.A."/>
            <person name="Hong L."/>
            <person name="Houston K.A."/>
            <person name="Hoskins R.A."/>
            <person name="Johnson G."/>
            <person name="Martin C."/>
            <person name="Moshrefi A.R."/>
            <person name="Palazzolo M."/>
            <person name="Reese M.G."/>
            <person name="Spradling A.C."/>
            <person name="Tsang G."/>
            <person name="Wan K.H."/>
            <person name="Whitelaw K."/>
            <person name="Celniker S.E."/>
            <person name="Rubin G.M."/>
        </authorList>
    </citation>
    <scope>NUCLEOTIDE SEQUENCE [LARGE SCALE GENOMIC DNA]</scope>
    <source>
        <strain>Berkeley</strain>
    </source>
</reference>
<reference key="4">
    <citation type="journal article" date="2000" name="Science">
        <title>The genome sequence of Drosophila melanogaster.</title>
        <authorList>
            <person name="Adams M.D."/>
            <person name="Celniker S.E."/>
            <person name="Holt R.A."/>
            <person name="Evans C.A."/>
            <person name="Gocayne J.D."/>
            <person name="Amanatides P.G."/>
            <person name="Scherer S.E."/>
            <person name="Li P.W."/>
            <person name="Hoskins R.A."/>
            <person name="Galle R.F."/>
            <person name="George R.A."/>
            <person name="Lewis S.E."/>
            <person name="Richards S."/>
            <person name="Ashburner M."/>
            <person name="Henderson S.N."/>
            <person name="Sutton G.G."/>
            <person name="Wortman J.R."/>
            <person name="Yandell M.D."/>
            <person name="Zhang Q."/>
            <person name="Chen L.X."/>
            <person name="Brandon R.C."/>
            <person name="Rogers Y.-H.C."/>
            <person name="Blazej R.G."/>
            <person name="Champe M."/>
            <person name="Pfeiffer B.D."/>
            <person name="Wan K.H."/>
            <person name="Doyle C."/>
            <person name="Baxter E.G."/>
            <person name="Helt G."/>
            <person name="Nelson C.R."/>
            <person name="Miklos G.L.G."/>
            <person name="Abril J.F."/>
            <person name="Agbayani A."/>
            <person name="An H.-J."/>
            <person name="Andrews-Pfannkoch C."/>
            <person name="Baldwin D."/>
            <person name="Ballew R.M."/>
            <person name="Basu A."/>
            <person name="Baxendale J."/>
            <person name="Bayraktaroglu L."/>
            <person name="Beasley E.M."/>
            <person name="Beeson K.Y."/>
            <person name="Benos P.V."/>
            <person name="Berman B.P."/>
            <person name="Bhandari D."/>
            <person name="Bolshakov S."/>
            <person name="Borkova D."/>
            <person name="Botchan M.R."/>
            <person name="Bouck J."/>
            <person name="Brokstein P."/>
            <person name="Brottier P."/>
            <person name="Burtis K.C."/>
            <person name="Busam D.A."/>
            <person name="Butler H."/>
            <person name="Cadieu E."/>
            <person name="Center A."/>
            <person name="Chandra I."/>
            <person name="Cherry J.M."/>
            <person name="Cawley S."/>
            <person name="Dahlke C."/>
            <person name="Davenport L.B."/>
            <person name="Davies P."/>
            <person name="de Pablos B."/>
            <person name="Delcher A."/>
            <person name="Deng Z."/>
            <person name="Mays A.D."/>
            <person name="Dew I."/>
            <person name="Dietz S.M."/>
            <person name="Dodson K."/>
            <person name="Doup L.E."/>
            <person name="Downes M."/>
            <person name="Dugan-Rocha S."/>
            <person name="Dunkov B.C."/>
            <person name="Dunn P."/>
            <person name="Durbin K.J."/>
            <person name="Evangelista C.C."/>
            <person name="Ferraz C."/>
            <person name="Ferriera S."/>
            <person name="Fleischmann W."/>
            <person name="Fosler C."/>
            <person name="Gabrielian A.E."/>
            <person name="Garg N.S."/>
            <person name="Gelbart W.M."/>
            <person name="Glasser K."/>
            <person name="Glodek A."/>
            <person name="Gong F."/>
            <person name="Gorrell J.H."/>
            <person name="Gu Z."/>
            <person name="Guan P."/>
            <person name="Harris M."/>
            <person name="Harris N.L."/>
            <person name="Harvey D.A."/>
            <person name="Heiman T.J."/>
            <person name="Hernandez J.R."/>
            <person name="Houck J."/>
            <person name="Hostin D."/>
            <person name="Houston K.A."/>
            <person name="Howland T.J."/>
            <person name="Wei M.-H."/>
            <person name="Ibegwam C."/>
            <person name="Jalali M."/>
            <person name="Kalush F."/>
            <person name="Karpen G.H."/>
            <person name="Ke Z."/>
            <person name="Kennison J.A."/>
            <person name="Ketchum K.A."/>
            <person name="Kimmel B.E."/>
            <person name="Kodira C.D."/>
            <person name="Kraft C.L."/>
            <person name="Kravitz S."/>
            <person name="Kulp D."/>
            <person name="Lai Z."/>
            <person name="Lasko P."/>
            <person name="Lei Y."/>
            <person name="Levitsky A.A."/>
            <person name="Li J.H."/>
            <person name="Li Z."/>
            <person name="Liang Y."/>
            <person name="Lin X."/>
            <person name="Liu X."/>
            <person name="Mattei B."/>
            <person name="McIntosh T.C."/>
            <person name="McLeod M.P."/>
            <person name="McPherson D."/>
            <person name="Merkulov G."/>
            <person name="Milshina N.V."/>
            <person name="Mobarry C."/>
            <person name="Morris J."/>
            <person name="Moshrefi A."/>
            <person name="Mount S.M."/>
            <person name="Moy M."/>
            <person name="Murphy B."/>
            <person name="Murphy L."/>
            <person name="Muzny D.M."/>
            <person name="Nelson D.L."/>
            <person name="Nelson D.R."/>
            <person name="Nelson K.A."/>
            <person name="Nixon K."/>
            <person name="Nusskern D.R."/>
            <person name="Pacleb J.M."/>
            <person name="Palazzolo M."/>
            <person name="Pittman G.S."/>
            <person name="Pan S."/>
            <person name="Pollard J."/>
            <person name="Puri V."/>
            <person name="Reese M.G."/>
            <person name="Reinert K."/>
            <person name="Remington K."/>
            <person name="Saunders R.D.C."/>
            <person name="Scheeler F."/>
            <person name="Shen H."/>
            <person name="Shue B.C."/>
            <person name="Siden-Kiamos I."/>
            <person name="Simpson M."/>
            <person name="Skupski M.P."/>
            <person name="Smith T.J."/>
            <person name="Spier E."/>
            <person name="Spradling A.C."/>
            <person name="Stapleton M."/>
            <person name="Strong R."/>
            <person name="Sun E."/>
            <person name="Svirskas R."/>
            <person name="Tector C."/>
            <person name="Turner R."/>
            <person name="Venter E."/>
            <person name="Wang A.H."/>
            <person name="Wang X."/>
            <person name="Wang Z.-Y."/>
            <person name="Wassarman D.A."/>
            <person name="Weinstock G.M."/>
            <person name="Weissenbach J."/>
            <person name="Williams S.M."/>
            <person name="Woodage T."/>
            <person name="Worley K.C."/>
            <person name="Wu D."/>
            <person name="Yang S."/>
            <person name="Yao Q.A."/>
            <person name="Ye J."/>
            <person name="Yeh R.-F."/>
            <person name="Zaveri J.S."/>
            <person name="Zhan M."/>
            <person name="Zhang G."/>
            <person name="Zhao Q."/>
            <person name="Zheng L."/>
            <person name="Zheng X.H."/>
            <person name="Zhong F.N."/>
            <person name="Zhong W."/>
            <person name="Zhou X."/>
            <person name="Zhu S.C."/>
            <person name="Zhu X."/>
            <person name="Smith H.O."/>
            <person name="Gibbs R.A."/>
            <person name="Myers E.W."/>
            <person name="Rubin G.M."/>
            <person name="Venter J.C."/>
        </authorList>
    </citation>
    <scope>NUCLEOTIDE SEQUENCE [LARGE SCALE GENOMIC DNA]</scope>
    <source>
        <strain>Berkeley</strain>
    </source>
</reference>
<reference key="5">
    <citation type="journal article" date="2002" name="Genome Biol.">
        <title>Annotation of the Drosophila melanogaster euchromatic genome: a systematic review.</title>
        <authorList>
            <person name="Misra S."/>
            <person name="Crosby M.A."/>
            <person name="Mungall C.J."/>
            <person name="Matthews B.B."/>
            <person name="Campbell K.S."/>
            <person name="Hradecky P."/>
            <person name="Huang Y."/>
            <person name="Kaminker J.S."/>
            <person name="Millburn G.H."/>
            <person name="Prochnik S.E."/>
            <person name="Smith C.D."/>
            <person name="Tupy J.L."/>
            <person name="Whitfield E.J."/>
            <person name="Bayraktaroglu L."/>
            <person name="Berman B.P."/>
            <person name="Bettencourt B.R."/>
            <person name="Celniker S.E."/>
            <person name="de Grey A.D.N.J."/>
            <person name="Drysdale R.A."/>
            <person name="Harris N.L."/>
            <person name="Richter J."/>
            <person name="Russo S."/>
            <person name="Schroeder A.J."/>
            <person name="Shu S.Q."/>
            <person name="Stapleton M."/>
            <person name="Yamada C."/>
            <person name="Ashburner M."/>
            <person name="Gelbart W.M."/>
            <person name="Rubin G.M."/>
            <person name="Lewis S.E."/>
        </authorList>
    </citation>
    <scope>GENOME REANNOTATION</scope>
    <source>
        <strain>Berkeley</strain>
    </source>
</reference>
<reference key="6">
    <citation type="submission" date="2004-08" db="EMBL/GenBank/DDBJ databases">
        <authorList>
            <person name="Stapleton M."/>
            <person name="Carlson J.W."/>
            <person name="Chavez C."/>
            <person name="Frise E."/>
            <person name="George R.A."/>
            <person name="Pacleb J.M."/>
            <person name="Park S."/>
            <person name="Wan K.H."/>
            <person name="Yu C."/>
            <person name="Rubin G.M."/>
            <person name="Celniker S.E."/>
        </authorList>
    </citation>
    <scope>NUCLEOTIDE SEQUENCE [LARGE SCALE MRNA]</scope>
    <source>
        <strain>Berkeley</strain>
        <tissue>Head</tissue>
    </source>
</reference>
<reference key="7">
    <citation type="journal article" date="2002" name="Genome Biol.">
        <title>A Drosophila full-length cDNA resource.</title>
        <authorList>
            <person name="Stapleton M."/>
            <person name="Carlson J.W."/>
            <person name="Brokstein P."/>
            <person name="Yu C."/>
            <person name="Champe M."/>
            <person name="George R.A."/>
            <person name="Guarin H."/>
            <person name="Kronmiller B."/>
            <person name="Pacleb J.M."/>
            <person name="Park S."/>
            <person name="Wan K.H."/>
            <person name="Rubin G.M."/>
            <person name="Celniker S.E."/>
        </authorList>
    </citation>
    <scope>NUCLEOTIDE SEQUENCE [LARGE SCALE MRNA] OF 1148-1596</scope>
    <source>
        <strain>Berkeley</strain>
        <tissue>Embryo</tissue>
    </source>
</reference>
<reference key="8">
    <citation type="journal article" date="2003" name="Genetics">
        <title>Evidence of a high rate of selective sweeps in African Drosophila melanogaster.</title>
        <authorList>
            <person name="Mousset S."/>
            <person name="Brazier L."/>
            <person name="Cariou M.L."/>
            <person name="Chartois F."/>
            <person name="Depaulis F."/>
            <person name="Veuille M."/>
        </authorList>
    </citation>
    <scope>NUCLEOTIDE SEQUENCE [GENOMIC DNA] OF 1240-1582</scope>
    <source>
        <strain>In_L003</strain>
        <strain>In_L004</strain>
        <strain>In_L012</strain>
        <strain>In_L018</strain>
        <strain>In_L019</strain>
        <strain>In_L021</strain>
        <strain>In_L031</strain>
        <strain>In_L035</strain>
        <strain>In_L101</strain>
        <strain>St_L005</strain>
        <strain>St_L013</strain>
        <strain>St_L027</strain>
        <strain>St_L028</strain>
        <strain>St_L033</strain>
        <strain>St_L037</strain>
        <strain>St_L106</strain>
        <strain>St_L111</strain>
        <strain>St_L120</strain>
        <strain>St_L124</strain>
        <strain>St_L127</strain>
    </source>
</reference>
<reference key="9">
    <citation type="journal article" date="2008" name="J. Proteome Res.">
        <title>Phosphoproteome analysis of Drosophila melanogaster embryos.</title>
        <authorList>
            <person name="Zhai B."/>
            <person name="Villen J."/>
            <person name="Beausoleil S.A."/>
            <person name="Mintseris J."/>
            <person name="Gygi S.P."/>
        </authorList>
    </citation>
    <scope>PHOSPHORYLATION [LARGE SCALE ANALYSIS] AT SER-1550 AND SER-1551</scope>
    <scope>IDENTIFICATION BY MASS SPECTROMETRY</scope>
    <source>
        <tissue>Embryo</tissue>
    </source>
</reference>
<reference key="10">
    <citation type="journal article" date="1994" name="Nat. Struct. Biol.">
        <title>NMR structure of the N-terminal SH3 domain of GRB2 and its complex with a proline-rich peptide from Sos.</title>
        <authorList>
            <person name="Goudreau N."/>
            <person name="Cornille F."/>
            <person name="Duchesne M."/>
            <person name="Parker F."/>
            <person name="Tocque B."/>
            <person name="Garbay C."/>
            <person name="Roques B.P."/>
        </authorList>
    </citation>
    <scope>STRUCTURE BY NMR OF 1342-1351</scope>
</reference>
<name>SOS_DROME</name>
<gene>
    <name type="primary">Sos</name>
    <name type="ORF">CG7793</name>
</gene>
<proteinExistence type="evidence at protein level"/>
<sequence>MFSGPSGHAHTISYGGGIGLGTGGGGGSGGSGSGSQGGGGGIGIGGGGVAGLQDCDGYDFTKCENAARWRGLFTPSLKKVLEQVHPRVTAKEDALLYVEKLCLRLLAMLCAKPLPHSVQDVEEKVNKSFPAPIDQWALNEAKEVINSKKRKSVLPTEKVHTLLQKDVLQYKIDSSVSAFLVAVLEYISADILKMAGDYVIKIAHCEITKEDIEVVMNADRVLMDMLNQSEAHILPSPLSLPAQRASATYEETVKELIHDEKQYQRDLHMIIRVFREELVKIVSDPRELEPIFSNIMDIYEVTVTLLGSLEDVIEMSQEQSAPCVGSCFEELAEAEEFDVYKKYAYDVTSQASRDALNNLLSKPGASSLTTAGHGFRDAVKYYLPKLLLVPICHAFVYFDYIKHLKDLSSSQDDIESFEQVQGLLHPLHCDLEKVMASLSKERQVPVSGRVRRQLAIERTRELQMKVEHWEDKDVGQNCNEFIREDSLSKLGSGKRIWSERKVFLFDGLMVLCKANTKKQTPSAGATAYDYRLKEKYFMRRVDINDRPDSDDLKNSFELAPRMQPPIVLTAKNAQHKHDWMADLLMVITKSMLDRHLDSILQDIERKHPLRMPSPEIYKFAVPDSGDNIVLEERESAGVPMIKGATLCKLIERLTYHIYADPTFVRTFLTTYRYFCSPQQLLQLLVERFNIPDPSLVYQDTGTAGAGGMGGVGGDKEHKNSHREDWKRYRKEYVQPVQFRVLNVLRHWVDHHFYDFEKDPMLLEKLLNFLEHVNGKSMRKWVDSVLKIVQRKNEQEKSNKKIVYAYGHDPPPIEHHLSVPNDEITLLTLHPLELARQLTLLEFEMYKNVKPSELVGSPWTKKDKEVKSPNLLKIMKHTTNVTRWIEKSITEAENYEERLAIMQRAIEVMMVMLELNNFNGILSIVAAMGTASVYRLRWTFQGLPERYRKFLEECRELSDDHLKKYQERLRSINPPCVPFFGRYLTNILHLEEGNPDLLANTELINFSKRRKVAEIIGEIQQYQNQPYCLNEESTIRQFFEQLDPFNGLSDKQMSDYLYNESLRIEPRGCKTVPKFPRKWPHIPLKSPGIKPRRQNQTNSSSKLSNSTSSVAAAAAASSTATSIATASAPSLHASSIMDAPTAAAANAGSGTLAGEQSPQHNPHAFSVFAPVIIPERNTSSWSGTPQHTRTDQNNGEVSVPAPHLPKKPGAHVWANNNSTLASASAMDVVFSPALPEHLPPQSLPDSNPFASDTEAPPSPLPKLVVSPRHETGNRSPFHGRMQNSPTHSTASTVTLTGMSTSGGEEFCAGGFYFNSAHQGQPGAVPISPHVNVPMATNMEYRAVPPPLPPRRKERTESCADMAQKRQAPDAPTLPPRDGELSPPPIPPRLNHSTGISYLRQSHGKSKEFVGNSSLLLPNTSSIMIRRNSAIEKRAAATSQPNQAAAGPISTTLVTVSQAVATDEPLPLPISPAASSSTTTSPLTPAMSPMSPNIPSHPVESTSSSYAHQLRMRQQQQQQTHPAIYSQHHQHHATHLPHHPHQHHSNPTQSRSSPKEFFPIATSLEGTPKLPPKPSLSANFYNNPDKGTMFLYPSTNEE</sequence>
<accession>P26675</accession>
<accession>Q6AWF4</accession>
<accession>Q8I067</accession>
<accession>Q8I0F7</accession>
<accession>Q8ITK2</accession>
<accession>Q95TI8</accession>
<accession>Q969D6</accession>
<accession>Q9VJV9</accession>
<protein>
    <recommendedName>
        <fullName>Protein son of sevenless</fullName>
    </recommendedName>
</protein>
<feature type="chain" id="PRO_0000068898" description="Protein son of sevenless">
    <location>
        <begin position="1"/>
        <end position="1596"/>
    </location>
</feature>
<feature type="domain" description="DH" evidence="1">
    <location>
        <begin position="248"/>
        <end position="434"/>
    </location>
</feature>
<feature type="domain" description="PH" evidence="3">
    <location>
        <begin position="480"/>
        <end position="588"/>
    </location>
</feature>
<feature type="domain" description="N-terminal Ras-GEF" evidence="2">
    <location>
        <begin position="637"/>
        <end position="792"/>
    </location>
</feature>
<feature type="domain" description="Ras-GEF" evidence="4">
    <location>
        <begin position="829"/>
        <end position="1066"/>
    </location>
</feature>
<feature type="region of interest" description="Disordered" evidence="5">
    <location>
        <begin position="1073"/>
        <end position="1105"/>
    </location>
</feature>
<feature type="region of interest" description="Disordered" evidence="5">
    <location>
        <begin position="1175"/>
        <end position="1212"/>
    </location>
</feature>
<feature type="region of interest" description="Disordered" evidence="5">
    <location>
        <begin position="1235"/>
        <end position="1291"/>
    </location>
</feature>
<feature type="region of interest" description="Disordered" evidence="5">
    <location>
        <begin position="1340"/>
        <end position="1392"/>
    </location>
</feature>
<feature type="region of interest" description="Disordered" evidence="5">
    <location>
        <begin position="1465"/>
        <end position="1596"/>
    </location>
</feature>
<feature type="compositionally biased region" description="Low complexity" evidence="5">
    <location>
        <begin position="1096"/>
        <end position="1105"/>
    </location>
</feature>
<feature type="compositionally biased region" description="Polar residues" evidence="5">
    <location>
        <begin position="1175"/>
        <end position="1195"/>
    </location>
</feature>
<feature type="compositionally biased region" description="Polar residues" evidence="5">
    <location>
        <begin position="1280"/>
        <end position="1291"/>
    </location>
</feature>
<feature type="compositionally biased region" description="Basic and acidic residues" evidence="5">
    <location>
        <begin position="1352"/>
        <end position="1366"/>
    </location>
</feature>
<feature type="compositionally biased region" description="Low complexity" evidence="5">
    <location>
        <begin position="1469"/>
        <end position="1489"/>
    </location>
</feature>
<feature type="compositionally biased region" description="Basic residues" evidence="5">
    <location>
        <begin position="1526"/>
        <end position="1542"/>
    </location>
</feature>
<feature type="modified residue" description="Phosphoserine" evidence="7">
    <location>
        <position position="1550"/>
    </location>
</feature>
<feature type="modified residue" description="Phosphoserine" evidence="7">
    <location>
        <position position="1551"/>
    </location>
</feature>
<feature type="sequence variant" description="In strain: St_L028 and St_L033.">
    <original>P</original>
    <variation>L</variation>
    <location>
        <position position="1256"/>
    </location>
</feature>
<feature type="sequence variant" description="In strain: In_L019.">
    <original>A</original>
    <variation>S</variation>
    <location>
        <position position="1322"/>
    </location>
</feature>
<feature type="sequence variant" description="In strain: In_L019.">
    <original>S</original>
    <variation>N</variation>
    <location>
        <position position="1503"/>
    </location>
</feature>
<feature type="sequence conflict" description="In Ref. 6; AAT94523." evidence="9" ref="6">
    <original>G</original>
    <variation>W</variation>
    <location>
        <position position="15"/>
    </location>
</feature>
<feature type="sequence conflict" description="In Ref. 1." evidence="9" ref="1">
    <original>HILPSPLSLPAQR</original>
    <variation>TSCPVPCHFPRS</variation>
    <location>
        <begin position="232"/>
        <end position="244"/>
    </location>
</feature>
<feature type="sequence conflict" description="In Ref. 6; AAT94523." evidence="9" ref="6">
    <original>A</original>
    <variation>T</variation>
    <location>
        <position position="523"/>
    </location>
</feature>
<feature type="sequence conflict" description="In Ref. 1; AAB04680." evidence="9" ref="1">
    <original>P</original>
    <variation>V</variation>
    <location>
        <position position="1463"/>
    </location>
</feature>
<feature type="sequence conflict" description="In Ref. 6; AAT94523." evidence="9" ref="6">
    <original>I</original>
    <variation>V</variation>
    <location>
        <position position="1468"/>
    </location>
</feature>
<comment type="function">
    <text evidence="6 8">Promotes the exchange of Ras-bound GDP by GTP. Functions in signaling pathways initiated by the sevenless and epidermal growth factor receptor tyrosine kinases; implies a role for the ras pathway in neuronal development.</text>
</comment>
<comment type="subunit">
    <text>May form a complex with sevenless and DRK.</text>
</comment>
<comment type="interaction">
    <interactant intactId="EBI-82070">
        <id>P26675</id>
    </interactant>
    <interactant intactId="EBI-161391">
        <id>Q08012</id>
        <label>drk</label>
    </interactant>
    <organismsDiffer>false</organismsDiffer>
    <experiments>2</experiments>
</comment>
<comment type="sequence caution" evidence="9">
    <conflict type="erroneous initiation">
        <sequence resource="EMBL-CDS" id="AAL13978"/>
    </conflict>
</comment>
<organism>
    <name type="scientific">Drosophila melanogaster</name>
    <name type="common">Fruit fly</name>
    <dbReference type="NCBI Taxonomy" id="7227"/>
    <lineage>
        <taxon>Eukaryota</taxon>
        <taxon>Metazoa</taxon>
        <taxon>Ecdysozoa</taxon>
        <taxon>Arthropoda</taxon>
        <taxon>Hexapoda</taxon>
        <taxon>Insecta</taxon>
        <taxon>Pterygota</taxon>
        <taxon>Neoptera</taxon>
        <taxon>Endopterygota</taxon>
        <taxon>Diptera</taxon>
        <taxon>Brachycera</taxon>
        <taxon>Muscomorpha</taxon>
        <taxon>Ephydroidea</taxon>
        <taxon>Drosophilidae</taxon>
        <taxon>Drosophila</taxon>
        <taxon>Sophophora</taxon>
    </lineage>
</organism>
<dbReference type="EMBL" id="M83931">
    <property type="protein sequence ID" value="AAB04680.1"/>
    <property type="molecule type" value="mRNA"/>
</dbReference>
<dbReference type="EMBL" id="M77501">
    <property type="protein sequence ID" value="AAA28904.1"/>
    <property type="molecule type" value="Genomic_DNA"/>
</dbReference>
<dbReference type="EMBL" id="AE014134">
    <property type="protein sequence ID" value="AAF53336.2"/>
    <property type="molecule type" value="Genomic_DNA"/>
</dbReference>
<dbReference type="EMBL" id="BT015294">
    <property type="protein sequence ID" value="AAT94523.1"/>
    <property type="molecule type" value="mRNA"/>
</dbReference>
<dbReference type="EMBL" id="AY058749">
    <property type="protein sequence ID" value="AAL13978.1"/>
    <property type="status" value="ALT_INIT"/>
    <property type="molecule type" value="mRNA"/>
</dbReference>
<dbReference type="EMBL" id="AF459566">
    <property type="protein sequence ID" value="AAN61382.1"/>
    <property type="molecule type" value="Genomic_DNA"/>
</dbReference>
<dbReference type="EMBL" id="AF459567">
    <property type="protein sequence ID" value="AAN61383.1"/>
    <property type="molecule type" value="Genomic_DNA"/>
</dbReference>
<dbReference type="EMBL" id="AF459568">
    <property type="protein sequence ID" value="AAN61384.1"/>
    <property type="molecule type" value="Genomic_DNA"/>
</dbReference>
<dbReference type="EMBL" id="AF459569">
    <property type="protein sequence ID" value="AAN61385.1"/>
    <property type="molecule type" value="Genomic_DNA"/>
</dbReference>
<dbReference type="EMBL" id="AF459570">
    <property type="protein sequence ID" value="AAN61386.1"/>
    <property type="molecule type" value="Genomic_DNA"/>
</dbReference>
<dbReference type="EMBL" id="AF459571">
    <property type="protein sequence ID" value="AAN61387.1"/>
    <property type="molecule type" value="Genomic_DNA"/>
</dbReference>
<dbReference type="EMBL" id="AF459572">
    <property type="protein sequence ID" value="AAN61388.1"/>
    <property type="molecule type" value="Genomic_DNA"/>
</dbReference>
<dbReference type="EMBL" id="AF459573">
    <property type="protein sequence ID" value="AAN61389.1"/>
    <property type="molecule type" value="Genomic_DNA"/>
</dbReference>
<dbReference type="EMBL" id="AF459574">
    <property type="protein sequence ID" value="AAN61390.1"/>
    <property type="molecule type" value="Genomic_DNA"/>
</dbReference>
<dbReference type="EMBL" id="AF459575">
    <property type="protein sequence ID" value="AAN61391.1"/>
    <property type="molecule type" value="Genomic_DNA"/>
</dbReference>
<dbReference type="EMBL" id="AF459576">
    <property type="protein sequence ID" value="AAN61392.1"/>
    <property type="molecule type" value="Genomic_DNA"/>
</dbReference>
<dbReference type="EMBL" id="AF459577">
    <property type="protein sequence ID" value="AAN61393.1"/>
    <property type="molecule type" value="Genomic_DNA"/>
</dbReference>
<dbReference type="EMBL" id="AF459578">
    <property type="protein sequence ID" value="AAN61394.1"/>
    <property type="molecule type" value="Genomic_DNA"/>
</dbReference>
<dbReference type="EMBL" id="AF459579">
    <property type="protein sequence ID" value="AAN61395.1"/>
    <property type="molecule type" value="Genomic_DNA"/>
</dbReference>
<dbReference type="EMBL" id="AF459580">
    <property type="protein sequence ID" value="AAN61396.1"/>
    <property type="molecule type" value="Genomic_DNA"/>
</dbReference>
<dbReference type="EMBL" id="AF459581">
    <property type="protein sequence ID" value="AAN61397.1"/>
    <property type="molecule type" value="Genomic_DNA"/>
</dbReference>
<dbReference type="EMBL" id="AF459582">
    <property type="protein sequence ID" value="AAN61398.1"/>
    <property type="molecule type" value="Genomic_DNA"/>
</dbReference>
<dbReference type="EMBL" id="AF459583">
    <property type="protein sequence ID" value="AAN61399.1"/>
    <property type="molecule type" value="Genomic_DNA"/>
</dbReference>
<dbReference type="EMBL" id="AF459584">
    <property type="protein sequence ID" value="AAN61400.1"/>
    <property type="molecule type" value="Genomic_DNA"/>
</dbReference>
<dbReference type="EMBL" id="AF459585">
    <property type="protein sequence ID" value="AAN61401.1"/>
    <property type="molecule type" value="Genomic_DNA"/>
</dbReference>
<dbReference type="PIR" id="A41216">
    <property type="entry name" value="A41216"/>
</dbReference>
<dbReference type="RefSeq" id="NP_476597.2">
    <property type="nucleotide sequence ID" value="NM_057249.6"/>
</dbReference>
<dbReference type="PDB" id="1AZE">
    <property type="method" value="NMR"/>
    <property type="chains" value="B=1342-1350"/>
</dbReference>
<dbReference type="PDBsum" id="1AZE"/>
<dbReference type="SMR" id="P26675"/>
<dbReference type="BioGRID" id="60823">
    <property type="interactions" value="41"/>
</dbReference>
<dbReference type="DIP" id="DIP-22308N"/>
<dbReference type="FunCoup" id="P26675">
    <property type="interactions" value="1465"/>
</dbReference>
<dbReference type="IntAct" id="P26675">
    <property type="interactions" value="12"/>
</dbReference>
<dbReference type="STRING" id="7227.FBpp0080118"/>
<dbReference type="iPTMnet" id="P26675"/>
<dbReference type="PaxDb" id="7227-FBpp0080118"/>
<dbReference type="EnsemblMetazoa" id="FBtr0080541">
    <property type="protein sequence ID" value="FBpp0080118"/>
    <property type="gene ID" value="FBgn0001965"/>
</dbReference>
<dbReference type="GeneID" id="34790"/>
<dbReference type="KEGG" id="dme:Dmel_CG7793"/>
<dbReference type="AGR" id="FB:FBgn0001965"/>
<dbReference type="CTD" id="34790"/>
<dbReference type="FlyBase" id="FBgn0001965">
    <property type="gene designation" value="Sos"/>
</dbReference>
<dbReference type="VEuPathDB" id="VectorBase:FBgn0001965"/>
<dbReference type="eggNOG" id="KOG3417">
    <property type="taxonomic scope" value="Eukaryota"/>
</dbReference>
<dbReference type="HOGENOM" id="CLU_002744_2_0_1"/>
<dbReference type="InParanoid" id="P26675"/>
<dbReference type="OMA" id="KNTHRED"/>
<dbReference type="OrthoDB" id="546434at2759"/>
<dbReference type="PhylomeDB" id="P26675"/>
<dbReference type="Reactome" id="R-DME-112412">
    <property type="pathway name" value="SOS-mediated signalling"/>
</dbReference>
<dbReference type="Reactome" id="R-DME-1250347">
    <property type="pathway name" value="SHC1 events in ERBB4 signaling"/>
</dbReference>
<dbReference type="Reactome" id="R-DME-1433557">
    <property type="pathway name" value="Signaling by SCF-KIT"/>
</dbReference>
<dbReference type="Reactome" id="R-DME-1433559">
    <property type="pathway name" value="Regulation of KIT signaling"/>
</dbReference>
<dbReference type="Reactome" id="R-DME-167044">
    <property type="pathway name" value="Signalling to RAS"/>
</dbReference>
<dbReference type="Reactome" id="R-DME-179812">
    <property type="pathway name" value="GRB2 events in EGFR signaling"/>
</dbReference>
<dbReference type="Reactome" id="R-DME-180336">
    <property type="pathway name" value="SHC1 events in EGFR signaling"/>
</dbReference>
<dbReference type="Reactome" id="R-DME-186763">
    <property type="pathway name" value="Downstream signal transduction"/>
</dbReference>
<dbReference type="Reactome" id="R-DME-193648">
    <property type="pathway name" value="NRAGE signals death through JNK"/>
</dbReference>
<dbReference type="Reactome" id="R-DME-1963640">
    <property type="pathway name" value="GRB2 events in ERBB2 signaling"/>
</dbReference>
<dbReference type="Reactome" id="R-DME-2179392">
    <property type="pathway name" value="EGFR Transactivation by Gastrin"/>
</dbReference>
<dbReference type="Reactome" id="R-DME-2424491">
    <property type="pathway name" value="DAP12 signaling"/>
</dbReference>
<dbReference type="Reactome" id="R-DME-2428933">
    <property type="pathway name" value="SHC-related events triggered by IGF1R"/>
</dbReference>
<dbReference type="Reactome" id="R-DME-2730905">
    <property type="pathway name" value="Role of LAT2/NTAL/LAB on calcium mobilization"/>
</dbReference>
<dbReference type="Reactome" id="R-DME-2871796">
    <property type="pathway name" value="FCERI mediated MAPK activation"/>
</dbReference>
<dbReference type="Reactome" id="R-DME-2871809">
    <property type="pathway name" value="FCERI mediated Ca+2 mobilization"/>
</dbReference>
<dbReference type="Reactome" id="R-DME-375165">
    <property type="pathway name" value="NCAM signaling for neurite out-growth"/>
</dbReference>
<dbReference type="Reactome" id="R-DME-416482">
    <property type="pathway name" value="G alpha (12/13) signalling events"/>
</dbReference>
<dbReference type="Reactome" id="R-DME-5654688">
    <property type="pathway name" value="SHC-mediated cascade:FGFR1"/>
</dbReference>
<dbReference type="Reactome" id="R-DME-5654693">
    <property type="pathway name" value="FRS-mediated FGFR1 signaling"/>
</dbReference>
<dbReference type="Reactome" id="R-DME-5654699">
    <property type="pathway name" value="SHC-mediated cascade:FGFR2"/>
</dbReference>
<dbReference type="Reactome" id="R-DME-5654700">
    <property type="pathway name" value="FRS-mediated FGFR2 signaling"/>
</dbReference>
<dbReference type="Reactome" id="R-DME-5654704">
    <property type="pathway name" value="SHC-mediated cascade:FGFR3"/>
</dbReference>
<dbReference type="Reactome" id="R-DME-5654706">
    <property type="pathway name" value="FRS-mediated FGFR3 signaling"/>
</dbReference>
<dbReference type="Reactome" id="R-DME-5654712">
    <property type="pathway name" value="FRS-mediated FGFR4 signaling"/>
</dbReference>
<dbReference type="Reactome" id="R-DME-5654719">
    <property type="pathway name" value="SHC-mediated cascade:FGFR4"/>
</dbReference>
<dbReference type="Reactome" id="R-DME-5673001">
    <property type="pathway name" value="RAF/MAP kinase cascade"/>
</dbReference>
<dbReference type="Reactome" id="R-DME-74749">
    <property type="pathway name" value="Signal attenuation"/>
</dbReference>
<dbReference type="Reactome" id="R-DME-74751">
    <property type="pathway name" value="Insulin receptor signalling cascade"/>
</dbReference>
<dbReference type="Reactome" id="R-DME-8853659">
    <property type="pathway name" value="RET signaling"/>
</dbReference>
<dbReference type="Reactome" id="R-DME-9013149">
    <property type="pathway name" value="RAC1 GTPase cycle"/>
</dbReference>
<dbReference type="Reactome" id="R-DME-9607240">
    <property type="pathway name" value="FLT3 Signaling"/>
</dbReference>
<dbReference type="SignaLink" id="P26675"/>
<dbReference type="BioGRID-ORCS" id="34790">
    <property type="hits" value="0 hits in 3 CRISPR screens"/>
</dbReference>
<dbReference type="EvolutionaryTrace" id="P26675"/>
<dbReference type="GenomeRNAi" id="34790"/>
<dbReference type="PRO" id="PR:P26675"/>
<dbReference type="Proteomes" id="UP000000803">
    <property type="component" value="Chromosome 2L"/>
</dbReference>
<dbReference type="Bgee" id="FBgn0001965">
    <property type="expression patterns" value="Expressed in wing disc and 63 other cell types or tissues"/>
</dbReference>
<dbReference type="ExpressionAtlas" id="P26675">
    <property type="expression patterns" value="baseline and differential"/>
</dbReference>
<dbReference type="GO" id="GO:0005829">
    <property type="term" value="C:cytosol"/>
    <property type="evidence" value="ECO:0000314"/>
    <property type="project" value="FlyBase"/>
</dbReference>
<dbReference type="GO" id="GO:0031234">
    <property type="term" value="C:extrinsic component of cytoplasmic side of plasma membrane"/>
    <property type="evidence" value="ECO:0000314"/>
    <property type="project" value="FlyBase"/>
</dbReference>
<dbReference type="GO" id="GO:0005886">
    <property type="term" value="C:plasma membrane"/>
    <property type="evidence" value="ECO:0000318"/>
    <property type="project" value="GO_Central"/>
</dbReference>
<dbReference type="GO" id="GO:0035997">
    <property type="term" value="C:rhabdomere microvillus membrane"/>
    <property type="evidence" value="ECO:0000314"/>
    <property type="project" value="FlyBase"/>
</dbReference>
<dbReference type="GO" id="GO:0005085">
    <property type="term" value="F:guanyl-nucleotide exchange factor activity"/>
    <property type="evidence" value="ECO:0000314"/>
    <property type="project" value="FlyBase"/>
</dbReference>
<dbReference type="GO" id="GO:0046982">
    <property type="term" value="F:protein heterodimerization activity"/>
    <property type="evidence" value="ECO:0007669"/>
    <property type="project" value="InterPro"/>
</dbReference>
<dbReference type="GO" id="GO:0016199">
    <property type="term" value="P:axon midline choice point recognition"/>
    <property type="evidence" value="ECO:0000316"/>
    <property type="project" value="FlyBase"/>
</dbReference>
<dbReference type="GO" id="GO:0051607">
    <property type="term" value="P:defense response to virus"/>
    <property type="evidence" value="ECO:0000315"/>
    <property type="project" value="FlyBase"/>
</dbReference>
<dbReference type="GO" id="GO:0007173">
    <property type="term" value="P:epidermal growth factor receptor signaling pathway"/>
    <property type="evidence" value="ECO:0000315"/>
    <property type="project" value="FlyBase"/>
</dbReference>
<dbReference type="GO" id="GO:0007427">
    <property type="term" value="P:epithelial cell migration, open tracheal system"/>
    <property type="evidence" value="ECO:0000315"/>
    <property type="project" value="FlyBase"/>
</dbReference>
<dbReference type="GO" id="GO:0008543">
    <property type="term" value="P:fibroblast growth factor receptor signaling pathway"/>
    <property type="evidence" value="ECO:0000315"/>
    <property type="project" value="FlyBase"/>
</dbReference>
<dbReference type="GO" id="GO:0007480">
    <property type="term" value="P:imaginal disc-derived leg morphogenesis"/>
    <property type="evidence" value="ECO:0000315"/>
    <property type="project" value="FlyBase"/>
</dbReference>
<dbReference type="GO" id="GO:2000134">
    <property type="term" value="P:negative regulation of G1/S transition of mitotic cell cycle"/>
    <property type="evidence" value="ECO:0000315"/>
    <property type="project" value="FlyBase"/>
</dbReference>
<dbReference type="GO" id="GO:0043703">
    <property type="term" value="P:photoreceptor cell fate determination"/>
    <property type="evidence" value="ECO:0000316"/>
    <property type="project" value="FlyBase"/>
</dbReference>
<dbReference type="GO" id="GO:0045793">
    <property type="term" value="P:positive regulation of cell size"/>
    <property type="evidence" value="ECO:0000315"/>
    <property type="project" value="FlyBase"/>
</dbReference>
<dbReference type="GO" id="GO:0035022">
    <property type="term" value="P:positive regulation of Rac protein signal transduction"/>
    <property type="evidence" value="ECO:0000316"/>
    <property type="project" value="FlyBase"/>
</dbReference>
<dbReference type="GO" id="GO:0046579">
    <property type="term" value="P:positive regulation of Ras protein signal transduction"/>
    <property type="evidence" value="ECO:0000314"/>
    <property type="project" value="FlyBase"/>
</dbReference>
<dbReference type="GO" id="GO:0007465">
    <property type="term" value="P:R7 cell fate commitment"/>
    <property type="evidence" value="ECO:0000316"/>
    <property type="project" value="FlyBase"/>
</dbReference>
<dbReference type="GO" id="GO:0007265">
    <property type="term" value="P:Ras protein signal transduction"/>
    <property type="evidence" value="ECO:0000318"/>
    <property type="project" value="GO_Central"/>
</dbReference>
<dbReference type="GO" id="GO:0045500">
    <property type="term" value="P:sevenless signaling pathway"/>
    <property type="evidence" value="ECO:0000316"/>
    <property type="project" value="FlyBase"/>
</dbReference>
<dbReference type="GO" id="GO:0008293">
    <property type="term" value="P:torso signaling pathway"/>
    <property type="evidence" value="ECO:0000315"/>
    <property type="project" value="FlyBase"/>
</dbReference>
<dbReference type="GO" id="GO:0007426">
    <property type="term" value="P:tracheal outgrowth, open tracheal system"/>
    <property type="evidence" value="ECO:0000315"/>
    <property type="project" value="FlyBase"/>
</dbReference>
<dbReference type="GO" id="GO:0048010">
    <property type="term" value="P:vascular endothelial growth factor receptor signaling pathway"/>
    <property type="evidence" value="ECO:0000315"/>
    <property type="project" value="FlyBase"/>
</dbReference>
<dbReference type="CDD" id="cd22914">
    <property type="entry name" value="HFD_SOS1_rpt1"/>
    <property type="match status" value="1"/>
</dbReference>
<dbReference type="CDD" id="cd22915">
    <property type="entry name" value="HFD_SOS1_rpt2"/>
    <property type="match status" value="1"/>
</dbReference>
<dbReference type="CDD" id="cd01261">
    <property type="entry name" value="PH_SOS"/>
    <property type="match status" value="1"/>
</dbReference>
<dbReference type="CDD" id="cd00155">
    <property type="entry name" value="RasGEF"/>
    <property type="match status" value="1"/>
</dbReference>
<dbReference type="CDD" id="cd06224">
    <property type="entry name" value="REM"/>
    <property type="match status" value="1"/>
</dbReference>
<dbReference type="CDD" id="cd00160">
    <property type="entry name" value="RhoGEF"/>
    <property type="match status" value="1"/>
</dbReference>
<dbReference type="FunFam" id="1.10.20.10:FF:000029">
    <property type="entry name" value="son of sevenless homolog 1 isoform X1"/>
    <property type="match status" value="1"/>
</dbReference>
<dbReference type="FunFam" id="1.20.900.10:FF:000015">
    <property type="entry name" value="son of sevenless homolog 1 isoform X1"/>
    <property type="match status" value="1"/>
</dbReference>
<dbReference type="Gene3D" id="6.10.250.3060">
    <property type="match status" value="1"/>
</dbReference>
<dbReference type="Gene3D" id="1.20.900.10">
    <property type="entry name" value="Dbl homology (DH) domain"/>
    <property type="match status" value="1"/>
</dbReference>
<dbReference type="Gene3D" id="1.10.20.10">
    <property type="entry name" value="Histone, subunit A"/>
    <property type="match status" value="1"/>
</dbReference>
<dbReference type="Gene3D" id="2.30.29.30">
    <property type="entry name" value="Pleckstrin-homology domain (PH domain)/Phosphotyrosine-binding domain (PTB)"/>
    <property type="match status" value="1"/>
</dbReference>
<dbReference type="Gene3D" id="1.10.840.10">
    <property type="entry name" value="Ras guanine-nucleotide exchange factors catalytic domain"/>
    <property type="match status" value="1"/>
</dbReference>
<dbReference type="Gene3D" id="1.20.870.10">
    <property type="entry name" value="Son of sevenless (SoS) protein Chain: S domain 1"/>
    <property type="match status" value="1"/>
</dbReference>
<dbReference type="IDEAL" id="IID50185"/>
<dbReference type="InterPro" id="IPR035899">
    <property type="entry name" value="DBL_dom_sf"/>
</dbReference>
<dbReference type="InterPro" id="IPR000219">
    <property type="entry name" value="DH_dom"/>
</dbReference>
<dbReference type="InterPro" id="IPR009072">
    <property type="entry name" value="Histone-fold"/>
</dbReference>
<dbReference type="InterPro" id="IPR011993">
    <property type="entry name" value="PH-like_dom_sf"/>
</dbReference>
<dbReference type="InterPro" id="IPR001849">
    <property type="entry name" value="PH_domain"/>
</dbReference>
<dbReference type="InterPro" id="IPR008937">
    <property type="entry name" value="Ras-like_GEF"/>
</dbReference>
<dbReference type="InterPro" id="IPR000651">
    <property type="entry name" value="Ras-like_Gua-exchang_fac_N"/>
</dbReference>
<dbReference type="InterPro" id="IPR019804">
    <property type="entry name" value="Ras_G-nucl-exch_fac_CS"/>
</dbReference>
<dbReference type="InterPro" id="IPR023578">
    <property type="entry name" value="Ras_GEF_dom_sf"/>
</dbReference>
<dbReference type="InterPro" id="IPR001895">
    <property type="entry name" value="RASGEF_cat_dom"/>
</dbReference>
<dbReference type="InterPro" id="IPR036964">
    <property type="entry name" value="RASGEF_cat_dom_sf"/>
</dbReference>
<dbReference type="PANTHER" id="PTHR23113">
    <property type="entry name" value="GUANINE NUCLEOTIDE EXCHANGE FACTOR"/>
    <property type="match status" value="1"/>
</dbReference>
<dbReference type="PANTHER" id="PTHR23113:SF363">
    <property type="entry name" value="PROTEIN SON OF SEVENLESS"/>
    <property type="match status" value="1"/>
</dbReference>
<dbReference type="Pfam" id="PF00169">
    <property type="entry name" value="PH"/>
    <property type="match status" value="1"/>
</dbReference>
<dbReference type="Pfam" id="PF00617">
    <property type="entry name" value="RasGEF"/>
    <property type="match status" value="1"/>
</dbReference>
<dbReference type="Pfam" id="PF00618">
    <property type="entry name" value="RasGEF_N"/>
    <property type="match status" value="1"/>
</dbReference>
<dbReference type="Pfam" id="PF00621">
    <property type="entry name" value="RhoGEF"/>
    <property type="match status" value="1"/>
</dbReference>
<dbReference type="SMART" id="SM00233">
    <property type="entry name" value="PH"/>
    <property type="match status" value="1"/>
</dbReference>
<dbReference type="SMART" id="SM00147">
    <property type="entry name" value="RasGEF"/>
    <property type="match status" value="1"/>
</dbReference>
<dbReference type="SMART" id="SM00229">
    <property type="entry name" value="RasGEFN"/>
    <property type="match status" value="1"/>
</dbReference>
<dbReference type="SMART" id="SM00325">
    <property type="entry name" value="RhoGEF"/>
    <property type="match status" value="1"/>
</dbReference>
<dbReference type="SUPFAM" id="SSF48065">
    <property type="entry name" value="DBL homology domain (DH-domain)"/>
    <property type="match status" value="1"/>
</dbReference>
<dbReference type="SUPFAM" id="SSF47113">
    <property type="entry name" value="Histone-fold"/>
    <property type="match status" value="1"/>
</dbReference>
<dbReference type="SUPFAM" id="SSF50729">
    <property type="entry name" value="PH domain-like"/>
    <property type="match status" value="1"/>
</dbReference>
<dbReference type="SUPFAM" id="SSF48366">
    <property type="entry name" value="Ras GEF"/>
    <property type="match status" value="1"/>
</dbReference>
<dbReference type="PROSITE" id="PS50010">
    <property type="entry name" value="DH_2"/>
    <property type="match status" value="1"/>
</dbReference>
<dbReference type="PROSITE" id="PS50003">
    <property type="entry name" value="PH_DOMAIN"/>
    <property type="match status" value="1"/>
</dbReference>
<dbReference type="PROSITE" id="PS00720">
    <property type="entry name" value="RASGEF"/>
    <property type="match status" value="1"/>
</dbReference>
<dbReference type="PROSITE" id="PS50009">
    <property type="entry name" value="RASGEF_CAT"/>
    <property type="match status" value="1"/>
</dbReference>
<dbReference type="PROSITE" id="PS50212">
    <property type="entry name" value="RASGEF_NTER"/>
    <property type="match status" value="1"/>
</dbReference>
<keyword id="KW-0002">3D-structure</keyword>
<keyword id="KW-0217">Developmental protein</keyword>
<keyword id="KW-0221">Differentiation</keyword>
<keyword id="KW-0344">Guanine-nucleotide releasing factor</keyword>
<keyword id="KW-0524">Neurogenesis</keyword>
<keyword id="KW-0597">Phosphoprotein</keyword>
<keyword id="KW-1185">Reference proteome</keyword>